<comment type="function">
    <text evidence="2">RNA-dependent RNA polymerase which is responsible for replication and transcription of virus RNA segments. The transcription of viral mRNAs occurs by a unique mechanism called cap-snatching. 5' methylated caps of cellular mRNAs are cleaved after 10-13 nucleotides by PA. In turn, these short capped RNAs are used as primers by PB1 for transcription of viral mRNAs. During virus replication, PB1 initiates RNA synthesis and copy vRNA into complementary RNA (cRNA) which in turn serves as a template for the production of more vRNAs.</text>
</comment>
<comment type="catalytic activity">
    <reaction evidence="2">
        <text>RNA(n) + a ribonucleoside 5'-triphosphate = RNA(n+1) + diphosphate</text>
        <dbReference type="Rhea" id="RHEA:21248"/>
        <dbReference type="Rhea" id="RHEA-COMP:14527"/>
        <dbReference type="Rhea" id="RHEA-COMP:17342"/>
        <dbReference type="ChEBI" id="CHEBI:33019"/>
        <dbReference type="ChEBI" id="CHEBI:61557"/>
        <dbReference type="ChEBI" id="CHEBI:140395"/>
        <dbReference type="EC" id="2.7.7.48"/>
    </reaction>
</comment>
<comment type="subunit">
    <text evidence="1 2">Influenza RNA polymerase is composed of three subunits: PB1, PB2 and PA. Interacts (via N-terminus) with PA (via C-terminus). Interacts (via C-terminus) with PB2 (via N-terminus); this interaction is essential for transcription initiation. Interacts (via C-terminus) with human PKP2 (via N-terminus); the interaction competitively inhibits the interaction between the RNA polymerase subunits PB1 and PB2 (By similarity).</text>
</comment>
<comment type="subcellular location">
    <subcellularLocation>
        <location evidence="2">Host nucleus</location>
    </subcellularLocation>
    <subcellularLocation>
        <location evidence="2">Host cytoplasm</location>
    </subcellularLocation>
</comment>
<comment type="PTM">
    <text evidence="2">Phosphorylated by host PRKCA.</text>
</comment>
<comment type="similarity">
    <text evidence="2">Belongs to the influenza viruses polymerase PB1 family.</text>
</comment>
<name>RDRP_I88A7</name>
<evidence type="ECO:0000250" key="1">
    <source>
        <dbReference type="UniProtKB" id="P03431"/>
    </source>
</evidence>
<evidence type="ECO:0000255" key="2">
    <source>
        <dbReference type="HAMAP-Rule" id="MF_04065"/>
    </source>
</evidence>
<dbReference type="EC" id="2.7.7.48" evidence="2"/>
<dbReference type="EMBL" id="M25934">
    <property type="protein sequence ID" value="AAA43643.1"/>
    <property type="molecule type" value="Genomic_RNA"/>
</dbReference>
<dbReference type="SMR" id="P16514"/>
<dbReference type="GO" id="GO:0030430">
    <property type="term" value="C:host cell cytoplasm"/>
    <property type="evidence" value="ECO:0007669"/>
    <property type="project" value="UniProtKB-SubCell"/>
</dbReference>
<dbReference type="GO" id="GO:0042025">
    <property type="term" value="C:host cell nucleus"/>
    <property type="evidence" value="ECO:0007669"/>
    <property type="project" value="UniProtKB-SubCell"/>
</dbReference>
<dbReference type="GO" id="GO:0000166">
    <property type="term" value="F:nucleotide binding"/>
    <property type="evidence" value="ECO:0007669"/>
    <property type="project" value="UniProtKB-UniRule"/>
</dbReference>
<dbReference type="GO" id="GO:0003723">
    <property type="term" value="F:RNA binding"/>
    <property type="evidence" value="ECO:0007669"/>
    <property type="project" value="InterPro"/>
</dbReference>
<dbReference type="GO" id="GO:0003968">
    <property type="term" value="F:RNA-directed RNA polymerase activity"/>
    <property type="evidence" value="ECO:0007669"/>
    <property type="project" value="UniProtKB-UniRule"/>
</dbReference>
<dbReference type="GO" id="GO:0006351">
    <property type="term" value="P:DNA-templated transcription"/>
    <property type="evidence" value="ECO:0007669"/>
    <property type="project" value="UniProtKB-UniRule"/>
</dbReference>
<dbReference type="GO" id="GO:0039657">
    <property type="term" value="P:symbiont-mediated suppression of host gene expression"/>
    <property type="evidence" value="ECO:0007669"/>
    <property type="project" value="UniProtKB-KW"/>
</dbReference>
<dbReference type="GO" id="GO:0039523">
    <property type="term" value="P:symbiont-mediated suppression of host mRNA transcription via inhibition of RNA polymerase II activity"/>
    <property type="evidence" value="ECO:0007669"/>
    <property type="project" value="UniProtKB-UniRule"/>
</dbReference>
<dbReference type="GO" id="GO:0039694">
    <property type="term" value="P:viral RNA genome replication"/>
    <property type="evidence" value="ECO:0007669"/>
    <property type="project" value="UniProtKB-UniRule"/>
</dbReference>
<dbReference type="GO" id="GO:0019083">
    <property type="term" value="P:viral transcription"/>
    <property type="evidence" value="ECO:0007669"/>
    <property type="project" value="UniProtKB-KW"/>
</dbReference>
<dbReference type="Gene3D" id="6.10.140.720">
    <property type="match status" value="1"/>
</dbReference>
<dbReference type="HAMAP" id="MF_04065">
    <property type="entry name" value="INFV_RDRP"/>
    <property type="match status" value="1"/>
</dbReference>
<dbReference type="InterPro" id="IPR007099">
    <property type="entry name" value="RNA-dir_pol_NSvirus"/>
</dbReference>
<dbReference type="InterPro" id="IPR001407">
    <property type="entry name" value="RNA_pol_PB1_influenza"/>
</dbReference>
<dbReference type="Pfam" id="PF00602">
    <property type="entry name" value="Flu_PB1"/>
    <property type="match status" value="1"/>
</dbReference>
<dbReference type="PIRSF" id="PIRSF000827">
    <property type="entry name" value="RdRPol_OMV"/>
    <property type="match status" value="1"/>
</dbReference>
<dbReference type="PROSITE" id="PS50525">
    <property type="entry name" value="RDRP_SSRNA_NEG_SEG"/>
    <property type="match status" value="1"/>
</dbReference>
<organismHost>
    <name type="scientific">Aves</name>
    <dbReference type="NCBI Taxonomy" id="8782"/>
</organismHost>
<organismHost>
    <name type="scientific">Homo sapiens</name>
    <name type="common">Human</name>
    <dbReference type="NCBI Taxonomy" id="9606"/>
</organismHost>
<organismHost>
    <name type="scientific">Sus scrofa</name>
    <name type="common">Pig</name>
    <dbReference type="NCBI Taxonomy" id="9823"/>
</organismHost>
<sequence length="757" mass="86475">MDVNPTLLFLKVPAQNAISTTFPYTGDPPYSHGTGTGYTMDTVNRTHQYSERGKWTINTETGAPQLNPIDGPLPEDNEPTGYAQTDCVLEAMAFLEKSHPGIFENSCLETMEVVQQTRVDKLTQGRQTFDWTLNRNQPAATALANTIEVFRLNGLTTSESGRLIDFLKDVMESMEKEEMEIVTHFQRKRRVRDNMTKKMVTQRTIGKKKQKLNRRGYLIRALTLNTMTKDAERGKLKRRAIATPGMQIRGFVYFVETLARSICEKLEQSGLPVGGNEKKAKLANVVRKMMTNSQDTELSFTITGDNTKWNENQNPRMFLAMITYITRNQPEWFRNVLSVAPIMFSNKMARLGKGYMFESKNMKLRTQIPAEMLSSIDLRYFNDSTRRKIEKIRPLLIEGAASLSPGMMMGMFNMLSTVLGVSILNLGQKEYTKTSYWWDGLQSSDDFALIVNAPNHEGIQAGVDRFYRTCKLLGINMSKKKSYINRTGTFEFTSFFYRYGFVANFSMELPSFGVSGINESADMSIGVTVIKNNMINNDLGPATAQMALQLFIKDYRYTYRCHRGDTQIQTRRSFEIKKLWDQTRSKAGLLVSDGGPNLYNIRNLHIPEVCLKWELMDKDYQGRLCNPLNPFVSHKEIESVNNAVVMPSHGPAKTMEYDAVATTHSWVPKRNRSILNTSQRGILEDEQMYQKCCNLFEKFFPSSSYRRPVGISSMVEAMVSRARIDARIDFESGRIKKEDFAEIMKICSTIEDLRRQK</sequence>
<reference key="1">
    <citation type="journal article" date="1989" name="J. Virol.">
        <title>Avian-to-human transmission of the PB1 gene of influenza A viruses in the 1957 and 1968 pandemics.</title>
        <authorList>
            <person name="Kawaoka Y."/>
            <person name="Krauss S."/>
            <person name="Webster R.G."/>
        </authorList>
    </citation>
    <scope>NUCLEOTIDE SEQUENCE [GENOMIC RNA]</scope>
</reference>
<accession>P16514</accession>
<organism>
    <name type="scientific">Influenza A virus (strain A/Wisconsin/3523/1988 H1N1)</name>
    <dbReference type="NCBI Taxonomy" id="380346"/>
    <lineage>
        <taxon>Viruses</taxon>
        <taxon>Riboviria</taxon>
        <taxon>Orthornavirae</taxon>
        <taxon>Negarnaviricota</taxon>
        <taxon>Polyploviricotina</taxon>
        <taxon>Insthoviricetes</taxon>
        <taxon>Articulavirales</taxon>
        <taxon>Orthomyxoviridae</taxon>
        <taxon>Alphainfluenzavirus</taxon>
        <taxon>Alphainfluenzavirus influenzae</taxon>
        <taxon>Influenza A virus</taxon>
    </lineage>
</organism>
<gene>
    <name evidence="2" type="primary">PB1</name>
</gene>
<protein>
    <recommendedName>
        <fullName evidence="2">RNA-directed RNA polymerase catalytic subunit</fullName>
        <ecNumber evidence="2">2.7.7.48</ecNumber>
    </recommendedName>
    <alternativeName>
        <fullName evidence="2">Polymerase basic protein 1</fullName>
        <shortName evidence="2">PB1</shortName>
    </alternativeName>
    <alternativeName>
        <fullName evidence="2">RNA-directed RNA polymerase subunit P1</fullName>
    </alternativeName>
</protein>
<proteinExistence type="inferred from homology"/>
<feature type="chain" id="PRO_0000078768" description="RNA-directed RNA polymerase catalytic subunit">
    <location>
        <begin position="1"/>
        <end position="757"/>
    </location>
</feature>
<feature type="domain" description="RdRp catalytic" evidence="2">
    <location>
        <begin position="286"/>
        <end position="483"/>
    </location>
</feature>
<feature type="region of interest" description="Promoter-binding site" evidence="2">
    <location>
        <begin position="249"/>
        <end position="256"/>
    </location>
</feature>
<feature type="short sequence motif" description="Nuclear localization signal" evidence="2">
    <location>
        <begin position="187"/>
        <end position="195"/>
    </location>
</feature>
<feature type="short sequence motif" description="Nuclear localization signal" evidence="2">
    <location>
        <begin position="203"/>
        <end position="216"/>
    </location>
</feature>
<keyword id="KW-1262">Eukaryotic host gene expression shutoff by virus</keyword>
<keyword id="KW-1191">Eukaryotic host transcription shutoff by virus</keyword>
<keyword id="KW-1035">Host cytoplasm</keyword>
<keyword id="KW-1190">Host gene expression shutoff by virus</keyword>
<keyword id="KW-1048">Host nucleus</keyword>
<keyword id="KW-0945">Host-virus interaction</keyword>
<keyword id="KW-1104">Inhibition of host RNA polymerase II by virus</keyword>
<keyword id="KW-0547">Nucleotide-binding</keyword>
<keyword id="KW-0548">Nucleotidyltransferase</keyword>
<keyword id="KW-0597">Phosphoprotein</keyword>
<keyword id="KW-0696">RNA-directed RNA polymerase</keyword>
<keyword id="KW-0808">Transferase</keyword>
<keyword id="KW-0693">Viral RNA replication</keyword>
<keyword id="KW-1195">Viral transcription</keyword>